<name>YB12B_YEAST</name>
<keyword id="KW-0064">Aspartyl protease</keyword>
<keyword id="KW-0067">ATP-binding</keyword>
<keyword id="KW-0963">Cytoplasm</keyword>
<keyword id="KW-0229">DNA integration</keyword>
<keyword id="KW-0233">DNA recombination</keyword>
<keyword id="KW-0238">DNA-binding</keyword>
<keyword id="KW-0239">DNA-directed DNA polymerase</keyword>
<keyword id="KW-0255">Endonuclease</keyword>
<keyword id="KW-0378">Hydrolase</keyword>
<keyword id="KW-0460">Magnesium</keyword>
<keyword id="KW-0479">Metal-binding</keyword>
<keyword id="KW-0511">Multifunctional enzyme</keyword>
<keyword id="KW-0540">Nuclease</keyword>
<keyword id="KW-0547">Nucleotide-binding</keyword>
<keyword id="KW-0548">Nucleotidyltransferase</keyword>
<keyword id="KW-0539">Nucleus</keyword>
<keyword id="KW-0597">Phosphoprotein</keyword>
<keyword id="KW-0645">Protease</keyword>
<keyword id="KW-1185">Reference proteome</keyword>
<keyword id="KW-0688">Ribosomal frameshifting</keyword>
<keyword id="KW-0694">RNA-binding</keyword>
<keyword id="KW-0695">RNA-directed DNA polymerase</keyword>
<keyword id="KW-0808">Transferase</keyword>
<keyword id="KW-0814">Transposable element</keyword>
<keyword id="KW-0815">Transposition</keyword>
<keyword id="KW-1188">Viral release from host cell</keyword>
<keyword id="KW-0917">Virion maturation</keyword>
<keyword id="KW-0862">Zinc</keyword>
<keyword id="KW-0863">Zinc-finger</keyword>
<reference key="1">
    <citation type="journal article" date="1994" name="EMBO J.">
        <title>Complete DNA sequence of yeast chromosome II.</title>
        <authorList>
            <person name="Feldmann H."/>
            <person name="Aigle M."/>
            <person name="Aljinovic G."/>
            <person name="Andre B."/>
            <person name="Baclet M.C."/>
            <person name="Barthe C."/>
            <person name="Baur A."/>
            <person name="Becam A.-M."/>
            <person name="Biteau N."/>
            <person name="Boles E."/>
            <person name="Brandt T."/>
            <person name="Brendel M."/>
            <person name="Brueckner M."/>
            <person name="Bussereau F."/>
            <person name="Christiansen C."/>
            <person name="Contreras R."/>
            <person name="Crouzet M."/>
            <person name="Cziepluch C."/>
            <person name="Demolis N."/>
            <person name="Delaveau T."/>
            <person name="Doignon F."/>
            <person name="Domdey H."/>
            <person name="Duesterhus S."/>
            <person name="Dubois E."/>
            <person name="Dujon B."/>
            <person name="El Bakkoury M."/>
            <person name="Entian K.-D."/>
            <person name="Feuermann M."/>
            <person name="Fiers W."/>
            <person name="Fobo G.M."/>
            <person name="Fritz C."/>
            <person name="Gassenhuber J."/>
            <person name="Glansdorff N."/>
            <person name="Goffeau A."/>
            <person name="Grivell L.A."/>
            <person name="de Haan M."/>
            <person name="Hein C."/>
            <person name="Herbert C.J."/>
            <person name="Hollenberg C.P."/>
            <person name="Holmstroem K."/>
            <person name="Jacq C."/>
            <person name="Jacquet M."/>
            <person name="Jauniaux J.-C."/>
            <person name="Jonniaux J.-L."/>
            <person name="Kallesoee T."/>
            <person name="Kiesau P."/>
            <person name="Kirchrath L."/>
            <person name="Koetter P."/>
            <person name="Korol S."/>
            <person name="Liebl S."/>
            <person name="Logghe M."/>
            <person name="Lohan A.J.E."/>
            <person name="Louis E.J."/>
            <person name="Li Z.Y."/>
            <person name="Maat M.J."/>
            <person name="Mallet L."/>
            <person name="Mannhaupt G."/>
            <person name="Messenguy F."/>
            <person name="Miosga T."/>
            <person name="Molemans F."/>
            <person name="Mueller S."/>
            <person name="Nasr F."/>
            <person name="Obermaier B."/>
            <person name="Perea J."/>
            <person name="Pierard A."/>
            <person name="Piravandi E."/>
            <person name="Pohl F.M."/>
            <person name="Pohl T.M."/>
            <person name="Potier S."/>
            <person name="Proft M."/>
            <person name="Purnelle B."/>
            <person name="Ramezani Rad M."/>
            <person name="Rieger M."/>
            <person name="Rose M."/>
            <person name="Schaaff-Gerstenschlaeger I."/>
            <person name="Scherens B."/>
            <person name="Schwarzlose C."/>
            <person name="Skala J."/>
            <person name="Slonimski P.P."/>
            <person name="Smits P.H.M."/>
            <person name="Souciet J.-L."/>
            <person name="Steensma H.Y."/>
            <person name="Stucka R."/>
            <person name="Urrestarazu L.A."/>
            <person name="van der Aart Q.J.M."/>
            <person name="Van Dyck L."/>
            <person name="Vassarotti A."/>
            <person name="Vetter I."/>
            <person name="Vierendeels F."/>
            <person name="Vissers S."/>
            <person name="Wagner G."/>
            <person name="de Wergifosse P."/>
            <person name="Wolfe K.H."/>
            <person name="Zagulski M."/>
            <person name="Zimmermann F.K."/>
            <person name="Mewes H.-W."/>
            <person name="Kleine K."/>
        </authorList>
    </citation>
    <scope>NUCLEOTIDE SEQUENCE [LARGE SCALE GENOMIC DNA]</scope>
    <source>
        <strain>ATCC 204508 / S288c</strain>
    </source>
</reference>
<reference key="2">
    <citation type="journal article" date="2014" name="G3 (Bethesda)">
        <title>The reference genome sequence of Saccharomyces cerevisiae: Then and now.</title>
        <authorList>
            <person name="Engel S.R."/>
            <person name="Dietrich F.S."/>
            <person name="Fisk D.G."/>
            <person name="Binkley G."/>
            <person name="Balakrishnan R."/>
            <person name="Costanzo M.C."/>
            <person name="Dwight S.S."/>
            <person name="Hitz B.C."/>
            <person name="Karra K."/>
            <person name="Nash R.S."/>
            <person name="Weng S."/>
            <person name="Wong E.D."/>
            <person name="Lloyd P."/>
            <person name="Skrzypek M.S."/>
            <person name="Miyasato S.R."/>
            <person name="Simison M."/>
            <person name="Cherry J.M."/>
        </authorList>
    </citation>
    <scope>GENOME REANNOTATION</scope>
    <source>
        <strain>ATCC 204508 / S288c</strain>
    </source>
</reference>
<reference key="3">
    <citation type="journal article" date="1998" name="Genome Res.">
        <title>Transposable elements and genome organization: a comprehensive survey of retrotransposons revealed by the complete Saccharomyces cerevisiae genome sequence.</title>
        <authorList>
            <person name="Kim J.M."/>
            <person name="Vanguri S."/>
            <person name="Boeke J.D."/>
            <person name="Gabriel A."/>
            <person name="Voytas D.F."/>
        </authorList>
    </citation>
    <scope>NOMENCLATURE</scope>
</reference>
<reference key="4">
    <citation type="journal article" date="2005" name="Cytogenet. Genome Res.">
        <title>Happy together: the life and times of Ty retrotransposons and their hosts.</title>
        <authorList>
            <person name="Lesage P."/>
            <person name="Todeschini A.L."/>
        </authorList>
    </citation>
    <scope>REVIEW</scope>
</reference>
<reference key="5">
    <citation type="journal article" date="2005" name="Cytogenet. Genome Res.">
        <title>Reverse transcriptase and integrase of the Saccharomyces cerevisiae Ty1 element.</title>
        <authorList>
            <person name="Wilhelm F.-X."/>
            <person name="Wilhelm M."/>
            <person name="Gabriel A."/>
        </authorList>
    </citation>
    <scope>REVIEW</scope>
    <scope>DOMAINS</scope>
</reference>
<sequence length="1756" mass="198869">MESQQLSNYPHISHGSACASVTSKEVHTNQDPLDVSASKIQEYDKASTKANSQQTTTPASSAVPENPHHASPQPASVPPPQNGPYPQQCMMTQNQANPSGWSFYGHPSMIPYTPYQMSPMYFPPGPQSQFPQYPSSVGTPLSTPSPESGNTFTDSSSADSDMTSTKKYVRPPPMLTSPNDFPNWVKTYIKFLQNSNLGGIIPTVNGKPVRPITDDELTFLYNAFQIFAPSQFLPTWVKDILSVDYTDIMKILSKSIEKMQSDTQEANDIVTLANLQYNGSTPADAFETKVTNIIDRLNNNGIHINNKVACQLIMRGLSGEYKFLRYTRHRHLNMTVAELFLDIHAIYEEQQGSRNSKPNYRRNPSDEKNDSRSYTNTTKPKVIARNPQKTNNSKSKTARAHNVSTSNNSPSTDNDSISKSTTEPIQLNNKHDLHLGQKLTESTVNHTNHSDDELPGHLLLDSGASRTLIRSAHHIHSASSNPDINVVDAQKRNIPINAIGDLQFHFQDNTKTSLKVLHTPNIAYDLLSLNELAAVDITACFTKNVLERSDGTVLAPIVKYGDFYWVSKKYLLPSNISVPTINNVHTSESTRKYPYPFIHRMLAHANAQTIRYSLKNNTITYFNESDVDWSSAIDYQCPDCLIGKSTKHRHIKGSRLKYQNSYEPFQYLHTDIFGPVHNLPKSAPSYFISFTDETTKFRWVYPLHDRREDSILDVFTTILAFIKNQFQASVLVIQMDRGSEYTNRTLHKFLEKNGITPCYTTTADSRAHGVAERLNRTLLDDCRTQLQCSGLPNHLWFSAIEFSTIVRNSLASPKSKKSARQHAGLAGLDISTLLPFGQPVIVNDHNPNSKIHPRGIPGYALHPSRNSYGYIIYLPSLKKTVDTTNYVILQGKDSRLDQFNYDALTFDEDLNRLTASYQSFIASNEIQQSNDLNIESDHDFQSDIELYPEQPRNVLSKAVSPTDSTPPSTHTEDSKRVSKTNIRAPREVDPNISESNILPSKKRSSTPQISDIESTDSGGMHRLDVPLLAPMSQSNTHESSYASKSKDFRHSDSYSDNETNHTNVPISSTGGTNNKTVPQTSEQETEKRIIHRFTSDRILPSSESNSLHHVVPIKTSDTCFKENTEESIIADLPLPDLPPEPPTELSDSFKELPPINSRQTNSSLGGIGDSNAYTTINSKKRSLEDNETEIKVSRDTWNTKNMRSLEPPRSKKRIHLIAAVKAVKSIKPIRTTLRYDEAITYNKDIKEKEKYIEAYHKEVNQLLKMKTWDTDKYYDRKEIDPKRVINSMFIFNRKRDGTHKARFVARGDIQHPDTYDSGMQSNTVHHYALMTSLSLALDNNYYITQLDISSAYLYADIKEELYIRPPPHLGMNDKLIRLKKSLYGLKQSGANWYETIKSYLIKQCGMEEVRGWSCVFKNSQVTICLFVDDMILFSKDLNSNKRIIAKLKMQYDTKIINLGESDDEIQHDILGLEIKYQRGKYMKLGMENSLTEKIPKLNVPLNPNGRKLGAPGQPGLYINQQELELEEDDYKMKVHEMQKLIGLASYVGYKFRFDLLYYINTLAQHILFPSKQVLDMTYELIQFIWNTRDKQLIWHKSKPVKPTNKLVVISDASYGNQPYYKSQIGNIYLLNGKVIGGKSTKASLTCTSTTEAEIHAISESVPLLNNLSYLIQELDKKPITKGLLTDSKSTISIIISNNEEKFRNRFFGTKAMRLRDEVSGNHLHVCYIETKKNIADVMTKPLPIKTFKLLTNKWIH</sequence>
<evidence type="ECO:0000250" key="1"/>
<evidence type="ECO:0000250" key="2">
    <source>
        <dbReference type="UniProtKB" id="Q99231"/>
    </source>
</evidence>
<evidence type="ECO:0000255" key="3">
    <source>
        <dbReference type="PROSITE-ProRule" id="PRU00457"/>
    </source>
</evidence>
<evidence type="ECO:0000255" key="4">
    <source>
        <dbReference type="PROSITE-ProRule" id="PRU10094"/>
    </source>
</evidence>
<evidence type="ECO:0000256" key="5">
    <source>
        <dbReference type="SAM" id="MobiDB-lite"/>
    </source>
</evidence>
<gene>
    <name type="primary">TY1B-BR</name>
    <name type="synonym">YBRWTy1-2 POL</name>
    <name type="ordered locus">YBR012W-B</name>
    <name type="ORF">YBR0207</name>
</gene>
<proteinExistence type="inferred from homology"/>
<accession>Q12193</accession>
<accession>D6VQ13</accession>
<dbReference type="EC" id="3.4.23.-"/>
<dbReference type="EC" id="2.7.7.49"/>
<dbReference type="EC" id="2.7.7.7"/>
<dbReference type="EC" id="3.1.26.4"/>
<dbReference type="EMBL" id="Z35881">
    <property type="protein sequence ID" value="CAA84952.1"/>
    <property type="molecule type" value="Genomic_DNA"/>
</dbReference>
<dbReference type="EMBL" id="Z35882">
    <property type="protein sequence ID" value="CAA84954.1"/>
    <property type="molecule type" value="Genomic_DNA"/>
</dbReference>
<dbReference type="EMBL" id="BK006936">
    <property type="protein sequence ID" value="DAA07133.1"/>
    <property type="molecule type" value="Genomic_DNA"/>
</dbReference>
<dbReference type="PIR" id="S40969">
    <property type="entry name" value="S40969"/>
</dbReference>
<dbReference type="PIR" id="S45867">
    <property type="entry name" value="S45867"/>
</dbReference>
<dbReference type="RefSeq" id="NP_009567.1">
    <molecule id="Q12193-1"/>
    <property type="nucleotide sequence ID" value="NM_001180056.2"/>
</dbReference>
<dbReference type="BioGRID" id="32714">
    <property type="interactions" value="4"/>
</dbReference>
<dbReference type="DIP" id="DIP-8916N"/>
<dbReference type="FunCoup" id="Q12193">
    <property type="interactions" value="115"/>
</dbReference>
<dbReference type="MINT" id="Q12193"/>
<dbReference type="GlyGen" id="Q12193">
    <property type="glycosylation" value="3 sites"/>
</dbReference>
<dbReference type="iPTMnet" id="Q12193"/>
<dbReference type="PaxDb" id="4932-YBR012W-B"/>
<dbReference type="PeptideAtlas" id="Q12193"/>
<dbReference type="GeneID" id="852299"/>
<dbReference type="KEGG" id="sce:YBR012W-B"/>
<dbReference type="AGR" id="SGD:S000002155"/>
<dbReference type="SGD" id="S000002155">
    <property type="gene designation" value="YBR012W-B"/>
</dbReference>
<dbReference type="VEuPathDB" id="FungiDB:YBR012W-B"/>
<dbReference type="eggNOG" id="KOG0017">
    <property type="taxonomic scope" value="Eukaryota"/>
</dbReference>
<dbReference type="HOGENOM" id="CLU_244151_0_0_1"/>
<dbReference type="InParanoid" id="Q12193"/>
<dbReference type="OrthoDB" id="4046078at2759"/>
<dbReference type="BioGRID-ORCS" id="852299">
    <property type="hits" value="0 hits in 10 CRISPR screens"/>
</dbReference>
<dbReference type="Proteomes" id="UP000002311">
    <property type="component" value="Chromosome II"/>
</dbReference>
<dbReference type="RNAct" id="Q12193">
    <property type="molecule type" value="protein"/>
</dbReference>
<dbReference type="GO" id="GO:0005737">
    <property type="term" value="C:cytoplasm"/>
    <property type="evidence" value="ECO:0007669"/>
    <property type="project" value="UniProtKB-SubCell"/>
</dbReference>
<dbReference type="GO" id="GO:0005634">
    <property type="term" value="C:nucleus"/>
    <property type="evidence" value="ECO:0000314"/>
    <property type="project" value="SGD"/>
</dbReference>
<dbReference type="GO" id="GO:0004190">
    <property type="term" value="F:aspartic-type endopeptidase activity"/>
    <property type="evidence" value="ECO:0007669"/>
    <property type="project" value="UniProtKB-KW"/>
</dbReference>
<dbReference type="GO" id="GO:0005524">
    <property type="term" value="F:ATP binding"/>
    <property type="evidence" value="ECO:0007669"/>
    <property type="project" value="UniProtKB-KW"/>
</dbReference>
<dbReference type="GO" id="GO:0003677">
    <property type="term" value="F:DNA binding"/>
    <property type="evidence" value="ECO:0007669"/>
    <property type="project" value="UniProtKB-KW"/>
</dbReference>
<dbReference type="GO" id="GO:0003887">
    <property type="term" value="F:DNA-directed DNA polymerase activity"/>
    <property type="evidence" value="ECO:0007669"/>
    <property type="project" value="UniProtKB-KW"/>
</dbReference>
<dbReference type="GO" id="GO:0003723">
    <property type="term" value="F:RNA binding"/>
    <property type="evidence" value="ECO:0007669"/>
    <property type="project" value="UniProtKB-KW"/>
</dbReference>
<dbReference type="GO" id="GO:0003964">
    <property type="term" value="F:RNA-directed DNA polymerase activity"/>
    <property type="evidence" value="ECO:0007669"/>
    <property type="project" value="UniProtKB-KW"/>
</dbReference>
<dbReference type="GO" id="GO:0004523">
    <property type="term" value="F:RNA-DNA hybrid ribonuclease activity"/>
    <property type="evidence" value="ECO:0007669"/>
    <property type="project" value="UniProtKB-EC"/>
</dbReference>
<dbReference type="GO" id="GO:0008270">
    <property type="term" value="F:zinc ion binding"/>
    <property type="evidence" value="ECO:0007669"/>
    <property type="project" value="UniProtKB-KW"/>
</dbReference>
<dbReference type="GO" id="GO:0015074">
    <property type="term" value="P:DNA integration"/>
    <property type="evidence" value="ECO:0007669"/>
    <property type="project" value="UniProtKB-KW"/>
</dbReference>
<dbReference type="GO" id="GO:0006310">
    <property type="term" value="P:DNA recombination"/>
    <property type="evidence" value="ECO:0007669"/>
    <property type="project" value="UniProtKB-KW"/>
</dbReference>
<dbReference type="GO" id="GO:0006508">
    <property type="term" value="P:proteolysis"/>
    <property type="evidence" value="ECO:0007669"/>
    <property type="project" value="UniProtKB-KW"/>
</dbReference>
<dbReference type="GO" id="GO:0032196">
    <property type="term" value="P:transposition"/>
    <property type="evidence" value="ECO:0007669"/>
    <property type="project" value="UniProtKB-KW"/>
</dbReference>
<dbReference type="GO" id="GO:0075523">
    <property type="term" value="P:viral translational frameshifting"/>
    <property type="evidence" value="ECO:0007669"/>
    <property type="project" value="UniProtKB-KW"/>
</dbReference>
<dbReference type="CDD" id="cd09272">
    <property type="entry name" value="RNase_HI_RT_Ty1"/>
    <property type="match status" value="1"/>
</dbReference>
<dbReference type="FunFam" id="3.30.420.10:FF:000050">
    <property type="entry name" value="Transposon Ty2-DR3 Gag-Pol polyprotein"/>
    <property type="match status" value="1"/>
</dbReference>
<dbReference type="Gene3D" id="3.30.420.10">
    <property type="entry name" value="Ribonuclease H-like superfamily/Ribonuclease H"/>
    <property type="match status" value="1"/>
</dbReference>
<dbReference type="InterPro" id="IPR001969">
    <property type="entry name" value="Aspartic_peptidase_AS"/>
</dbReference>
<dbReference type="InterPro" id="IPR043502">
    <property type="entry name" value="DNA/RNA_pol_sf"/>
</dbReference>
<dbReference type="InterPro" id="IPR001584">
    <property type="entry name" value="Integrase_cat-core"/>
</dbReference>
<dbReference type="InterPro" id="IPR039537">
    <property type="entry name" value="Retrotran_Ty1/copia-like"/>
</dbReference>
<dbReference type="InterPro" id="IPR012337">
    <property type="entry name" value="RNaseH-like_sf"/>
</dbReference>
<dbReference type="InterPro" id="IPR036397">
    <property type="entry name" value="RNaseH_sf"/>
</dbReference>
<dbReference type="InterPro" id="IPR013103">
    <property type="entry name" value="RVT_2"/>
</dbReference>
<dbReference type="InterPro" id="IPR015820">
    <property type="entry name" value="TYA"/>
</dbReference>
<dbReference type="PANTHER" id="PTHR42648">
    <property type="entry name" value="TRANSPOSASE, PUTATIVE-RELATED"/>
    <property type="match status" value="1"/>
</dbReference>
<dbReference type="PANTHER" id="PTHR42648:SF11">
    <property type="entry name" value="TRANSPOSON TY4-P GAG-POL POLYPROTEIN"/>
    <property type="match status" value="1"/>
</dbReference>
<dbReference type="Pfam" id="PF00665">
    <property type="entry name" value="rve"/>
    <property type="match status" value="1"/>
</dbReference>
<dbReference type="Pfam" id="PF07727">
    <property type="entry name" value="RVT_2"/>
    <property type="match status" value="1"/>
</dbReference>
<dbReference type="Pfam" id="PF01021">
    <property type="entry name" value="TYA"/>
    <property type="match status" value="1"/>
</dbReference>
<dbReference type="SUPFAM" id="SSF56672">
    <property type="entry name" value="DNA/RNA polymerases"/>
    <property type="match status" value="1"/>
</dbReference>
<dbReference type="SUPFAM" id="SSF53098">
    <property type="entry name" value="Ribonuclease H-like"/>
    <property type="match status" value="1"/>
</dbReference>
<dbReference type="PROSITE" id="PS00141">
    <property type="entry name" value="ASP_PROTEASE"/>
    <property type="match status" value="1"/>
</dbReference>
<dbReference type="PROSITE" id="PS50994">
    <property type="entry name" value="INTEGRASE"/>
    <property type="match status" value="1"/>
</dbReference>
<protein>
    <recommendedName>
        <fullName>Transposon Ty1-BR Gag-Pol polyprotein</fullName>
    </recommendedName>
    <alternativeName>
        <fullName>Gag-Pol-p199</fullName>
    </alternativeName>
    <alternativeName>
        <fullName>TY1A-TY1B</fullName>
    </alternativeName>
    <alternativeName>
        <fullName>Transposon Ty1 TYA-TYB polyprotein</fullName>
    </alternativeName>
    <alternativeName>
        <fullName>p190</fullName>
    </alternativeName>
    <component>
        <recommendedName>
            <fullName>Capsid protein</fullName>
            <shortName>CA</shortName>
        </recommendedName>
        <alternativeName>
            <fullName>Gag-p45</fullName>
        </alternativeName>
        <alternativeName>
            <fullName>p54</fullName>
        </alternativeName>
    </component>
    <component>
        <recommendedName>
            <fullName>Ty1 protease</fullName>
            <shortName>PR</shortName>
            <ecNumber>3.4.23.-</ecNumber>
        </recommendedName>
        <alternativeName>
            <fullName>Pol-p20</fullName>
        </alternativeName>
        <alternativeName>
            <fullName>p23</fullName>
        </alternativeName>
    </component>
    <component>
        <recommendedName>
            <fullName>Integrase</fullName>
            <shortName>IN</shortName>
        </recommendedName>
        <alternativeName>
            <fullName>Pol-p71</fullName>
        </alternativeName>
        <alternativeName>
            <fullName>p84</fullName>
        </alternativeName>
        <alternativeName>
            <fullName>p90</fullName>
        </alternativeName>
    </component>
    <component>
        <recommendedName>
            <fullName>Reverse transcriptase/ribonuclease H</fullName>
            <shortName>RT</shortName>
            <shortName>RT-RH</shortName>
            <ecNumber>2.7.7.49</ecNumber>
            <ecNumber>2.7.7.7</ecNumber>
            <ecNumber>3.1.26.4</ecNumber>
        </recommendedName>
        <alternativeName>
            <fullName>Pol-p63</fullName>
        </alternativeName>
        <alternativeName>
            <fullName>p60</fullName>
        </alternativeName>
    </component>
</protein>
<feature type="chain" id="PRO_0000278993" description="Transposon Ty1-BR Gag-Pol polyprotein">
    <location>
        <begin position="1"/>
        <end position="1756"/>
    </location>
</feature>
<feature type="chain" id="PRO_0000278994" description="Capsid protein" evidence="1">
    <location>
        <begin position="1"/>
        <end position="401"/>
    </location>
</feature>
<feature type="chain" id="PRO_0000278995" description="Ty1 protease" evidence="1">
    <location>
        <begin position="402"/>
        <end position="582"/>
    </location>
</feature>
<feature type="chain" id="PRO_0000278996" description="Integrase" evidence="1">
    <location>
        <begin position="583"/>
        <end position="1218"/>
    </location>
</feature>
<feature type="chain" id="PRO_0000278997" description="Reverse transcriptase/ribonuclease H" evidence="1">
    <location>
        <begin position="1219"/>
        <end position="1756"/>
    </location>
</feature>
<feature type="domain" description="Integrase catalytic" evidence="3">
    <location>
        <begin position="660"/>
        <end position="835"/>
    </location>
</feature>
<feature type="domain" description="Reverse transcriptase Ty1/copia-type">
    <location>
        <begin position="1339"/>
        <end position="1477"/>
    </location>
</feature>
<feature type="domain" description="RNase H Ty1/copia-type">
    <location>
        <begin position="1611"/>
        <end position="1753"/>
    </location>
</feature>
<feature type="region of interest" description="Disordered" evidence="5">
    <location>
        <begin position="1"/>
        <end position="93"/>
    </location>
</feature>
<feature type="region of interest" description="Disordered" evidence="5">
    <location>
        <begin position="126"/>
        <end position="173"/>
    </location>
</feature>
<feature type="region of interest" description="RNA-binding" evidence="1">
    <location>
        <begin position="299"/>
        <end position="401"/>
    </location>
</feature>
<feature type="region of interest" description="Disordered" evidence="5">
    <location>
        <begin position="352"/>
        <end position="421"/>
    </location>
</feature>
<feature type="region of interest" description="Integrase-type zinc finger-like">
    <location>
        <begin position="583"/>
        <end position="640"/>
    </location>
</feature>
<feature type="region of interest" description="Disordered" evidence="5">
    <location>
        <begin position="956"/>
        <end position="1088"/>
    </location>
</feature>
<feature type="region of interest" description="Disordered" evidence="5">
    <location>
        <begin position="1142"/>
        <end position="1173"/>
    </location>
</feature>
<feature type="short sequence motif" description="Bipartite nuclear localization signal" evidence="1">
    <location>
        <begin position="1179"/>
        <end position="1213"/>
    </location>
</feature>
<feature type="compositionally biased region" description="Polar residues" evidence="5">
    <location>
        <begin position="1"/>
        <end position="10"/>
    </location>
</feature>
<feature type="compositionally biased region" description="Polar residues" evidence="5">
    <location>
        <begin position="48"/>
        <end position="60"/>
    </location>
</feature>
<feature type="compositionally biased region" description="Polar residues" evidence="5">
    <location>
        <begin position="127"/>
        <end position="152"/>
    </location>
</feature>
<feature type="compositionally biased region" description="Low complexity" evidence="5">
    <location>
        <begin position="153"/>
        <end position="165"/>
    </location>
</feature>
<feature type="compositionally biased region" description="Low complexity" evidence="5">
    <location>
        <begin position="402"/>
        <end position="418"/>
    </location>
</feature>
<feature type="compositionally biased region" description="Low complexity" evidence="5">
    <location>
        <begin position="960"/>
        <end position="969"/>
    </location>
</feature>
<feature type="compositionally biased region" description="Polar residues" evidence="5">
    <location>
        <begin position="1005"/>
        <end position="1017"/>
    </location>
</feature>
<feature type="compositionally biased region" description="Polar residues" evidence="5">
    <location>
        <begin position="1031"/>
        <end position="1043"/>
    </location>
</feature>
<feature type="compositionally biased region" description="Basic and acidic residues" evidence="5">
    <location>
        <begin position="1044"/>
        <end position="1053"/>
    </location>
</feature>
<feature type="compositionally biased region" description="Polar residues" evidence="5">
    <location>
        <begin position="1054"/>
        <end position="1082"/>
    </location>
</feature>
<feature type="active site" description="For protease activity; shared with dimeric partner" evidence="4">
    <location>
        <position position="461"/>
    </location>
</feature>
<feature type="binding site" evidence="3">
    <location>
        <position position="671"/>
    </location>
    <ligand>
        <name>Mg(2+)</name>
        <dbReference type="ChEBI" id="CHEBI:18420"/>
        <label>1</label>
        <note>catalytic; for integrase activity</note>
    </ligand>
</feature>
<feature type="binding site" evidence="3">
    <location>
        <position position="736"/>
    </location>
    <ligand>
        <name>Mg(2+)</name>
        <dbReference type="ChEBI" id="CHEBI:18420"/>
        <label>1</label>
        <note>catalytic; for integrase activity</note>
    </ligand>
</feature>
<feature type="binding site" evidence="3">
    <location>
        <position position="1347"/>
    </location>
    <ligand>
        <name>Mg(2+)</name>
        <dbReference type="ChEBI" id="CHEBI:18420"/>
        <label>2</label>
        <note>catalytic; for reverse transcriptase activity</note>
    </ligand>
</feature>
<feature type="binding site" evidence="3">
    <location>
        <position position="1428"/>
    </location>
    <ligand>
        <name>Mg(2+)</name>
        <dbReference type="ChEBI" id="CHEBI:18420"/>
        <label>2</label>
        <note>catalytic; for reverse transcriptase activity</note>
    </ligand>
</feature>
<feature type="binding site" evidence="3">
    <location>
        <position position="1429"/>
    </location>
    <ligand>
        <name>Mg(2+)</name>
        <dbReference type="ChEBI" id="CHEBI:18420"/>
        <label>2</label>
        <note>catalytic; for reverse transcriptase activity</note>
    </ligand>
</feature>
<feature type="binding site" evidence="3">
    <location>
        <position position="1611"/>
    </location>
    <ligand>
        <name>Mg(2+)</name>
        <dbReference type="ChEBI" id="CHEBI:18420"/>
        <label>3</label>
        <note>catalytic; for RNase H activity</note>
    </ligand>
</feature>
<feature type="binding site" evidence="3">
    <location>
        <position position="1653"/>
    </location>
    <ligand>
        <name>Mg(2+)</name>
        <dbReference type="ChEBI" id="CHEBI:18420"/>
        <label>3</label>
        <note>catalytic; for RNase H activity</note>
    </ligand>
</feature>
<feature type="binding site" evidence="3">
    <location>
        <position position="1686"/>
    </location>
    <ligand>
        <name>Mg(2+)</name>
        <dbReference type="ChEBI" id="CHEBI:18420"/>
        <label>3</label>
        <note>catalytic; for RNase H activity</note>
    </ligand>
</feature>
<feature type="site" description="Cleavage; by Ty1 protease" evidence="1">
    <location>
        <begin position="401"/>
        <end position="402"/>
    </location>
</feature>
<feature type="site" description="Cleavage; by Ty1 protease" evidence="1">
    <location>
        <begin position="582"/>
        <end position="583"/>
    </location>
</feature>
<feature type="site" description="Cleavage; by Ty1 protease" evidence="1">
    <location>
        <begin position="1218"/>
        <end position="1219"/>
    </location>
</feature>
<feature type="modified residue" description="Phosphoserine" evidence="2">
    <location>
        <position position="416"/>
    </location>
</feature>
<organism>
    <name type="scientific">Saccharomyces cerevisiae (strain ATCC 204508 / S288c)</name>
    <name type="common">Baker's yeast</name>
    <dbReference type="NCBI Taxonomy" id="559292"/>
    <lineage>
        <taxon>Eukaryota</taxon>
        <taxon>Fungi</taxon>
        <taxon>Dikarya</taxon>
        <taxon>Ascomycota</taxon>
        <taxon>Saccharomycotina</taxon>
        <taxon>Saccharomycetes</taxon>
        <taxon>Saccharomycetales</taxon>
        <taxon>Saccharomycetaceae</taxon>
        <taxon>Saccharomyces</taxon>
    </lineage>
</organism>
<comment type="function">
    <text evidence="1">Capsid protein (CA) is the structural component of the virus-like particle (VLP), forming the shell that encapsulates the retrotransposons dimeric RNA genome. The particles are assembled from trimer-clustered units and there are holes in the capsid shells that allow for the diffusion of macromolecules. CA also has nucleocapsid-like chaperone activity, promoting primer tRNA(i)-Met annealing to the multipartite primer-binding site (PBS), dimerization of Ty1 RNA and initiation of reverse transcription (By similarity).</text>
</comment>
<comment type="function">
    <text evidence="1">The aspartyl protease (PR) mediates the proteolytic cleavages of the Gag and Gag-Pol polyproteins after assembly of the VLP.</text>
</comment>
<comment type="function">
    <text evidence="1">Reverse transcriptase/ribonuclease H (RT) is a multifunctional enzyme that catalyzes the conversion of the retro-elements RNA genome into dsDNA within the VLP. The enzyme displays a DNA polymerase activity that can copy either DNA or RNA templates, and a ribonuclease H (RNase H) activity that cleaves the RNA strand of RNA-DNA heteroduplexes during plus-strand synthesis and hydrolyzes RNA primers. The conversion leads to a linear dsDNA copy of the retrotransposon that includes long terminal repeats (LTRs) at both ends (By similarity).</text>
</comment>
<comment type="function">
    <text evidence="1">Integrase (IN) targets the VLP to the nucleus, where a subparticle preintegration complex (PIC) containing at least integrase and the newly synthesized dsDNA copy of the retrotransposon must transit the nuclear membrane. Once in the nucleus, integrase performs the integration of the dsDNA into the host genome (By similarity).</text>
</comment>
<comment type="catalytic activity">
    <reaction>
        <text>DNA(n) + a 2'-deoxyribonucleoside 5'-triphosphate = DNA(n+1) + diphosphate</text>
        <dbReference type="Rhea" id="RHEA:22508"/>
        <dbReference type="Rhea" id="RHEA-COMP:17339"/>
        <dbReference type="Rhea" id="RHEA-COMP:17340"/>
        <dbReference type="ChEBI" id="CHEBI:33019"/>
        <dbReference type="ChEBI" id="CHEBI:61560"/>
        <dbReference type="ChEBI" id="CHEBI:173112"/>
        <dbReference type="EC" id="2.7.7.49"/>
    </reaction>
</comment>
<comment type="catalytic activity">
    <reaction>
        <text>DNA(n) + a 2'-deoxyribonucleoside 5'-triphosphate = DNA(n+1) + diphosphate</text>
        <dbReference type="Rhea" id="RHEA:22508"/>
        <dbReference type="Rhea" id="RHEA-COMP:17339"/>
        <dbReference type="Rhea" id="RHEA-COMP:17340"/>
        <dbReference type="ChEBI" id="CHEBI:33019"/>
        <dbReference type="ChEBI" id="CHEBI:61560"/>
        <dbReference type="ChEBI" id="CHEBI:173112"/>
        <dbReference type="EC" id="2.7.7.7"/>
    </reaction>
</comment>
<comment type="catalytic activity">
    <reaction>
        <text>Endonucleolytic cleavage to 5'-phosphomonoester.</text>
        <dbReference type="EC" id="3.1.26.4"/>
    </reaction>
</comment>
<comment type="subunit">
    <text evidence="1">The capsid protein forms a homotrimer, from which the VLPs are assembled. The protease is a homodimer, whose active site consists of two apposed aspartic acid residues (By similarity).</text>
</comment>
<comment type="subcellular location">
    <subcellularLocation>
        <location>Cytoplasm</location>
    </subcellularLocation>
    <subcellularLocation>
        <location evidence="1">Nucleus</location>
    </subcellularLocation>
</comment>
<comment type="alternative products">
    <event type="ribosomal frameshifting"/>
    <isoform>
        <id>Q12193-1</id>
        <name>Transposon Ty1-BR Gag-Pol polyprotein</name>
        <sequence type="displayed"/>
    </isoform>
    <isoform>
        <id>Q12217-1</id>
        <name>Transposon Ty1-BR Gag polyprotein</name>
        <sequence type="external"/>
    </isoform>
    <text evidence="1">The Gag-Pol polyprotein is generated by a +1 ribosomal frameshift. The ratio of Gag:Gag-Pol varies between 20:1 and 5:1 (By similarity).</text>
</comment>
<comment type="domain">
    <text evidence="1">The C-terminal RNA-binding region of CA is sufficient for all its nucleocapsid-like chaperone activities.</text>
</comment>
<comment type="domain">
    <text evidence="1">Integrase core domain contains the D-x(n)-D-x(35)-E motif, named for the phylogenetically conserved glutamic acid and aspartic acid residues and the invariant 35 amino acid spacing between the second and third acidic residues. Each acidic residue of the D,D(35)E motif is independently essential for the 3'-processing and strand transfer activities of purified integrase protein (By similarity).</text>
</comment>
<comment type="PTM">
    <text evidence="1">Initially, virus-like particles (VLPs) are composed of the structural unprocessed proteins Gag and Gag-Pol, and also contain the host initiator methionine tRNA (tRNA(i)-Met) which serves as a primer for minus-strand DNA synthesis, and a dimer of genomic Ty RNA. Processing of the polyproteins occurs within the particle and proceeds by an ordered pathway, called maturation. First, the protease (PR) is released by autocatalytic cleavage of the Gag-Pol polyprotein yielding capsid protein p45 and a Pol-p154 precursor protein. This cleavage is a prerequisite for subsequent processing of Pol-p154 at the remaining sites to release the mature structural and catalytic proteins. Maturation takes place prior to the RT reaction and is required to produce transposition-competent VLPs (By similarity).</text>
</comment>
<comment type="miscellaneous">
    <text>Retrotransposons are mobile genetic entities that are able to replicate via an RNA intermediate and a reverse transcription step. In contrast to retroviruses, retrotransposons are non-infectious, lack an envelope and remain intracellular. Ty1 retrotransposons belong to the copia elements (pseudoviridae).</text>
</comment>
<comment type="miscellaneous">
    <molecule>Isoform Transposon Ty1-BR Gag-Pol polyprotein</molecule>
    <text>Produced by +1 ribosomal frameshifting between codon Leu-435 and Gly-436 of the YBR012W-A ORF.</text>
</comment>